<keyword id="KW-0044">Antibiotic</keyword>
<keyword id="KW-0929">Antimicrobial</keyword>
<keyword id="KW-1015">Disulfide bond</keyword>
<keyword id="KW-0391">Immunity</keyword>
<keyword id="KW-0399">Innate immunity</keyword>
<keyword id="KW-0964">Secreted</keyword>
<keyword id="KW-0732">Signal</keyword>
<feature type="signal peptide" evidence="2">
    <location>
        <begin position="1"/>
        <end position="17"/>
    </location>
</feature>
<feature type="chain" id="PRO_0000372771" description="Putative defense protein Hdd11">
    <location>
        <begin position="18"/>
        <end position="165"/>
    </location>
</feature>
<feature type="domain" description="Reelin" evidence="3">
    <location>
        <begin position="18"/>
        <end position="165"/>
    </location>
</feature>
<feature type="disulfide bond" evidence="2">
    <location>
        <begin position="27"/>
        <end position="104"/>
    </location>
</feature>
<proteinExistence type="evidence at transcript level"/>
<evidence type="ECO:0000250" key="1"/>
<evidence type="ECO:0000255" key="2"/>
<evidence type="ECO:0000255" key="3">
    <source>
        <dbReference type="PROSITE-ProRule" id="PRU00363"/>
    </source>
</evidence>
<evidence type="ECO:0000269" key="4">
    <source>
    </source>
</evidence>
<evidence type="ECO:0000305" key="5"/>
<comment type="function">
    <text evidence="4">As this protein is expressed upon bacterial infection, it may have antimicrobial activity.</text>
</comment>
<comment type="subcellular location">
    <subcellularLocation>
        <location evidence="1">Secreted</location>
    </subcellularLocation>
</comment>
<comment type="induction">
    <text evidence="4">In larvae, by bacteria (E.coli and M.luteus).</text>
</comment>
<comment type="similarity">
    <text evidence="5">Belongs to the insect defense protein family.</text>
</comment>
<name>DFP11_HYPCU</name>
<dbReference type="EMBL" id="AF034999">
    <property type="protein sequence ID" value="AAD09280.1"/>
    <property type="molecule type" value="mRNA"/>
</dbReference>
<dbReference type="SMR" id="O96382"/>
<dbReference type="GO" id="GO:0005576">
    <property type="term" value="C:extracellular region"/>
    <property type="evidence" value="ECO:0000250"/>
    <property type="project" value="UniProtKB"/>
</dbReference>
<dbReference type="GO" id="GO:0016020">
    <property type="term" value="C:membrane"/>
    <property type="evidence" value="ECO:0007669"/>
    <property type="project" value="TreeGrafter"/>
</dbReference>
<dbReference type="GO" id="GO:0042742">
    <property type="term" value="P:defense response to bacterium"/>
    <property type="evidence" value="ECO:0007669"/>
    <property type="project" value="UniProtKB-KW"/>
</dbReference>
<dbReference type="GO" id="GO:0042832">
    <property type="term" value="P:defense response to protozoan"/>
    <property type="evidence" value="ECO:0000314"/>
    <property type="project" value="UniProtKB"/>
</dbReference>
<dbReference type="GO" id="GO:0045087">
    <property type="term" value="P:innate immune response"/>
    <property type="evidence" value="ECO:0007669"/>
    <property type="project" value="UniProtKB-KW"/>
</dbReference>
<dbReference type="CDD" id="cd08544">
    <property type="entry name" value="Reeler"/>
    <property type="match status" value="1"/>
</dbReference>
<dbReference type="FunFam" id="2.60.40.4060:FF:000003">
    <property type="entry name" value="Ferric chelate reductase 1"/>
    <property type="match status" value="1"/>
</dbReference>
<dbReference type="Gene3D" id="2.60.40.4060">
    <property type="entry name" value="Reeler domain"/>
    <property type="match status" value="1"/>
</dbReference>
<dbReference type="InterPro" id="IPR051237">
    <property type="entry name" value="Ferric-chelate_Red/DefProt"/>
</dbReference>
<dbReference type="InterPro" id="IPR002861">
    <property type="entry name" value="Reeler_dom"/>
</dbReference>
<dbReference type="InterPro" id="IPR042307">
    <property type="entry name" value="Reeler_sf"/>
</dbReference>
<dbReference type="PANTHER" id="PTHR45828:SF9">
    <property type="entry name" value="CELL WALL INTEGRITY AND STRESS RESPONSE COMPONENT 4-LIKE-RELATED"/>
    <property type="match status" value="1"/>
</dbReference>
<dbReference type="PANTHER" id="PTHR45828">
    <property type="entry name" value="CYTOCHROME B561/FERRIC REDUCTASE TRANSMEMBRANE"/>
    <property type="match status" value="1"/>
</dbReference>
<dbReference type="Pfam" id="PF02014">
    <property type="entry name" value="Reeler"/>
    <property type="match status" value="1"/>
</dbReference>
<dbReference type="PROSITE" id="PS51019">
    <property type="entry name" value="REELIN"/>
    <property type="match status" value="1"/>
</dbReference>
<organism>
    <name type="scientific">Hyphantria cunea</name>
    <name type="common">Fall webworm moth</name>
    <name type="synonym">Phalaena cunea</name>
    <dbReference type="NCBI Taxonomy" id="39466"/>
    <lineage>
        <taxon>Eukaryota</taxon>
        <taxon>Metazoa</taxon>
        <taxon>Ecdysozoa</taxon>
        <taxon>Arthropoda</taxon>
        <taxon>Hexapoda</taxon>
        <taxon>Insecta</taxon>
        <taxon>Pterygota</taxon>
        <taxon>Neoptera</taxon>
        <taxon>Endopterygota</taxon>
        <taxon>Lepidoptera</taxon>
        <taxon>Glossata</taxon>
        <taxon>Ditrysia</taxon>
        <taxon>Noctuoidea</taxon>
        <taxon>Erebidae</taxon>
        <taxon>Arctiinae</taxon>
        <taxon>Hyphantria</taxon>
    </lineage>
</organism>
<reference key="1">
    <citation type="journal article" date="1998" name="Insect Biochem. Mol. Biol.">
        <title>Isolation and characterization of immune-related genes from the fall webworm, Hyphantria cunea, using PCR-based differential display and subtractive cloning.</title>
        <authorList>
            <person name="Shin S.W."/>
            <person name="Park S.-S."/>
            <person name="Park D.-S."/>
            <person name="Kim M.G."/>
            <person name="Kim S.C."/>
            <person name="Brey P.T."/>
            <person name="Park H.-Y."/>
        </authorList>
    </citation>
    <scope>NUCLEOTIDE SEQUENCE [MRNA]</scope>
    <scope>FUNCTION</scope>
    <scope>INDUCTION</scope>
</reference>
<sequence>MWATYVFIAVSLACANGYSSGAPESVCQDMVPKHPVPPQSTPPPYTITTSTKTVKAGTPMEVVITGKKPTDKMRGLLLQAREGTKIVGKFTLAPNDPFAQLLNCGEPGNAITHKKHDEKNDKQTVAFTWTPPKDFVGEIKFRATIALNGAVFWVGVESGPVKVIS</sequence>
<protein>
    <recommendedName>
        <fullName>Putative defense protein Hdd11</fullName>
    </recommendedName>
    <alternativeName>
        <fullName>Hyphantria differentially displayed gene 11</fullName>
    </alternativeName>
</protein>
<accession>O96382</accession>